<sequence length="434" mass="51129">MAQFDLTRINCQYLDRHLTFPLLEFLCGKEIYNQQELLEYILETVNKTNMIDYTMDTRKRLNLSQEMPEELVQRKAEVLATLKQLQNEVAPIMKATDILKNGESMKDSKTFVNALQKDYNFKMEHLYSAYKLAKYLYECGNYQESTSYLYFCLIVMAPNDKNYLNVLWGKLAAEILTLNWNTALEDLTRLRDYIDSANFSTIQALQQRTWLIHWSVLVFFNHPKGRDLIIEMFLYKPLYLNAIQTMCPHIMRYLATAVVINRTRRNALKDLIKVIQQESYTYRDPITEFLECLYVNFDFEGARLKLHECQTVILNDFFIVACLNEFVEDARLMIFETFCRIHQCITISMLADKLNMKPNEAECWIVNLIRNARLNAKIDSKLGHVVMGTQPLSPYQQLVEKIDSLSMRSEHLAGLIERKSKQKNQESIDSWKYY</sequence>
<name>EI3E2_DROWI</name>
<keyword id="KW-0963">Cytoplasm</keyword>
<keyword id="KW-0396">Initiation factor</keyword>
<keyword id="KW-0648">Protein biosynthesis</keyword>
<keyword id="KW-1185">Reference proteome</keyword>
<comment type="function">
    <text evidence="2">Component of the eukaryotic translation initiation factor 3 (eIF-3) complex, which is involved in protein synthesis of a specialized repertoire of mRNAs and, together with other initiation factors, stimulates binding of mRNA and methionyl-tRNAi to the 40S ribosome. The eIF-3 complex specifically targets and initiates translation of a subset of mRNAs involved in cell proliferation.</text>
</comment>
<comment type="subunit">
    <text evidence="1 2">Component of the eukaryotic translation initiation factor 3 (eIF-3) complex. The eIF-3 complex interacts with pix. Interacts with mxt (By similarity).</text>
</comment>
<comment type="subcellular location">
    <subcellularLocation>
        <location evidence="2">Cytoplasm</location>
    </subcellularLocation>
</comment>
<comment type="similarity">
    <text evidence="2">Belongs to the eIF-3 subunit E family.</text>
</comment>
<dbReference type="EMBL" id="CH964062">
    <property type="protein sequence ID" value="EDW78849.1"/>
    <property type="molecule type" value="Genomic_DNA"/>
</dbReference>
<dbReference type="SMR" id="B4N3B0"/>
<dbReference type="STRING" id="7260.B4N3B0"/>
<dbReference type="EnsemblMetazoa" id="FBtr0243323">
    <property type="protein sequence ID" value="FBpp0241815"/>
    <property type="gene ID" value="FBgn0214681"/>
</dbReference>
<dbReference type="EnsemblMetazoa" id="XM_002067827.4">
    <property type="protein sequence ID" value="XP_002067863.1"/>
    <property type="gene ID" value="LOC6645096"/>
</dbReference>
<dbReference type="GeneID" id="6645096"/>
<dbReference type="KEGG" id="dwi:6645096"/>
<dbReference type="CTD" id="3646"/>
<dbReference type="eggNOG" id="KOG2758">
    <property type="taxonomic scope" value="Eukaryota"/>
</dbReference>
<dbReference type="HOGENOM" id="CLU_031132_0_0_1"/>
<dbReference type="OMA" id="NCPWILR"/>
<dbReference type="OrthoDB" id="417252at2759"/>
<dbReference type="PhylomeDB" id="B4N3B0"/>
<dbReference type="Proteomes" id="UP000007798">
    <property type="component" value="Unassembled WGS sequence"/>
</dbReference>
<dbReference type="GO" id="GO:0016282">
    <property type="term" value="C:eukaryotic 43S preinitiation complex"/>
    <property type="evidence" value="ECO:0007669"/>
    <property type="project" value="UniProtKB-UniRule"/>
</dbReference>
<dbReference type="GO" id="GO:0033290">
    <property type="term" value="C:eukaryotic 48S preinitiation complex"/>
    <property type="evidence" value="ECO:0007669"/>
    <property type="project" value="UniProtKB-UniRule"/>
</dbReference>
<dbReference type="GO" id="GO:0071540">
    <property type="term" value="C:eukaryotic translation initiation factor 3 complex, eIF3e"/>
    <property type="evidence" value="ECO:0007669"/>
    <property type="project" value="UniProtKB-UniRule"/>
</dbReference>
<dbReference type="GO" id="GO:0003743">
    <property type="term" value="F:translation initiation factor activity"/>
    <property type="evidence" value="ECO:0007669"/>
    <property type="project" value="UniProtKB-UniRule"/>
</dbReference>
<dbReference type="GO" id="GO:0001732">
    <property type="term" value="P:formation of cytoplasmic translation initiation complex"/>
    <property type="evidence" value="ECO:0007669"/>
    <property type="project" value="UniProtKB-UniRule"/>
</dbReference>
<dbReference type="CDD" id="cd21378">
    <property type="entry name" value="eIF3E"/>
    <property type="match status" value="1"/>
</dbReference>
<dbReference type="HAMAP" id="MF_03004">
    <property type="entry name" value="eIF3e"/>
    <property type="match status" value="1"/>
</dbReference>
<dbReference type="InterPro" id="IPR016650">
    <property type="entry name" value="eIF3e"/>
</dbReference>
<dbReference type="InterPro" id="IPR019010">
    <property type="entry name" value="eIF3e_N"/>
</dbReference>
<dbReference type="InterPro" id="IPR000717">
    <property type="entry name" value="PCI_dom"/>
</dbReference>
<dbReference type="InterPro" id="IPR036390">
    <property type="entry name" value="WH_DNA-bd_sf"/>
</dbReference>
<dbReference type="PANTHER" id="PTHR10317">
    <property type="entry name" value="EUKARYOTIC TRANSLATION INITIATION FACTOR 3 SUBUNIT E"/>
    <property type="match status" value="1"/>
</dbReference>
<dbReference type="Pfam" id="PF09440">
    <property type="entry name" value="eIF3_N"/>
    <property type="match status" value="1"/>
</dbReference>
<dbReference type="Pfam" id="PF01399">
    <property type="entry name" value="PCI"/>
    <property type="match status" value="1"/>
</dbReference>
<dbReference type="PIRSF" id="PIRSF016255">
    <property type="entry name" value="eIF3e_su6"/>
    <property type="match status" value="1"/>
</dbReference>
<dbReference type="SMART" id="SM01186">
    <property type="entry name" value="eIF3_N"/>
    <property type="match status" value="1"/>
</dbReference>
<dbReference type="SMART" id="SM00088">
    <property type="entry name" value="PINT"/>
    <property type="match status" value="1"/>
</dbReference>
<dbReference type="SUPFAM" id="SSF46785">
    <property type="entry name" value="Winged helix' DNA-binding domain"/>
    <property type="match status" value="1"/>
</dbReference>
<dbReference type="PROSITE" id="PS50250">
    <property type="entry name" value="PCI"/>
    <property type="match status" value="1"/>
</dbReference>
<accession>B4N3B0</accession>
<organism>
    <name type="scientific">Drosophila willistoni</name>
    <name type="common">Fruit fly</name>
    <dbReference type="NCBI Taxonomy" id="7260"/>
    <lineage>
        <taxon>Eukaryota</taxon>
        <taxon>Metazoa</taxon>
        <taxon>Ecdysozoa</taxon>
        <taxon>Arthropoda</taxon>
        <taxon>Hexapoda</taxon>
        <taxon>Insecta</taxon>
        <taxon>Pterygota</taxon>
        <taxon>Neoptera</taxon>
        <taxon>Endopterygota</taxon>
        <taxon>Diptera</taxon>
        <taxon>Brachycera</taxon>
        <taxon>Muscomorpha</taxon>
        <taxon>Ephydroidea</taxon>
        <taxon>Drosophilidae</taxon>
        <taxon>Drosophila</taxon>
        <taxon>Sophophora</taxon>
    </lineage>
</organism>
<evidence type="ECO:0000250" key="1">
    <source>
        <dbReference type="UniProtKB" id="O77410"/>
    </source>
</evidence>
<evidence type="ECO:0000255" key="2">
    <source>
        <dbReference type="HAMAP-Rule" id="MF_03004"/>
    </source>
</evidence>
<evidence type="ECO:0000255" key="3">
    <source>
        <dbReference type="PROSITE-ProRule" id="PRU01185"/>
    </source>
</evidence>
<reference key="1">
    <citation type="journal article" date="2007" name="Nature">
        <title>Evolution of genes and genomes on the Drosophila phylogeny.</title>
        <authorList>
            <consortium name="Drosophila 12 genomes consortium"/>
        </authorList>
    </citation>
    <scope>NUCLEOTIDE SEQUENCE [LARGE SCALE GENOMIC DNA]</scope>
    <source>
        <strain>Tucson 14030-0811.24</strain>
    </source>
</reference>
<feature type="chain" id="PRO_0000365973" description="Eukaryotic translation initiation factor 3 subunit E-2">
    <location>
        <begin position="1"/>
        <end position="434"/>
    </location>
</feature>
<feature type="domain" description="PCI" evidence="3">
    <location>
        <begin position="219"/>
        <end position="392"/>
    </location>
</feature>
<proteinExistence type="inferred from homology"/>
<protein>
    <recommendedName>
        <fullName evidence="2">Eukaryotic translation initiation factor 3 subunit E-2</fullName>
        <shortName evidence="2">eIF3e-2</shortName>
    </recommendedName>
    <alternativeName>
        <fullName evidence="2">Eukaryotic translation initiation factor 3 subunit 6-2</fullName>
    </alternativeName>
</protein>
<gene>
    <name type="primary">eIF3-S6-2</name>
    <name type="synonym">Int6-2</name>
    <name type="ORF">GK12672</name>
</gene>